<dbReference type="EMBL" id="CP000708">
    <property type="protein sequence ID" value="ABQ61336.1"/>
    <property type="molecule type" value="Genomic_DNA"/>
</dbReference>
<dbReference type="RefSeq" id="WP_002965136.1">
    <property type="nucleotide sequence ID" value="NC_009505.1"/>
</dbReference>
<dbReference type="SMR" id="A5VT30"/>
<dbReference type="GeneID" id="97534666"/>
<dbReference type="KEGG" id="bov:BOV_1992"/>
<dbReference type="HOGENOM" id="CLU_111574_0_0_5"/>
<dbReference type="PhylomeDB" id="A5VT30"/>
<dbReference type="Proteomes" id="UP000006383">
    <property type="component" value="Chromosome I"/>
</dbReference>
<dbReference type="GO" id="GO:0005737">
    <property type="term" value="C:cytoplasm"/>
    <property type="evidence" value="ECO:0007669"/>
    <property type="project" value="UniProtKB-SubCell"/>
</dbReference>
<dbReference type="GO" id="GO:0051082">
    <property type="term" value="F:unfolded protein binding"/>
    <property type="evidence" value="ECO:0007669"/>
    <property type="project" value="InterPro"/>
</dbReference>
<dbReference type="GO" id="GO:0006457">
    <property type="term" value="P:protein folding"/>
    <property type="evidence" value="ECO:0007669"/>
    <property type="project" value="UniProtKB-UniRule"/>
</dbReference>
<dbReference type="GO" id="GO:0051262">
    <property type="term" value="P:protein tetramerization"/>
    <property type="evidence" value="ECO:0007669"/>
    <property type="project" value="InterPro"/>
</dbReference>
<dbReference type="GO" id="GO:0015031">
    <property type="term" value="P:protein transport"/>
    <property type="evidence" value="ECO:0007669"/>
    <property type="project" value="UniProtKB-UniRule"/>
</dbReference>
<dbReference type="Gene3D" id="3.10.420.10">
    <property type="entry name" value="SecB-like"/>
    <property type="match status" value="1"/>
</dbReference>
<dbReference type="HAMAP" id="MF_00821">
    <property type="entry name" value="SecB"/>
    <property type="match status" value="1"/>
</dbReference>
<dbReference type="InterPro" id="IPR003708">
    <property type="entry name" value="SecB"/>
</dbReference>
<dbReference type="InterPro" id="IPR035958">
    <property type="entry name" value="SecB-like_sf"/>
</dbReference>
<dbReference type="NCBIfam" id="NF004392">
    <property type="entry name" value="PRK05751.1-3"/>
    <property type="match status" value="1"/>
</dbReference>
<dbReference type="NCBIfam" id="TIGR00809">
    <property type="entry name" value="secB"/>
    <property type="match status" value="1"/>
</dbReference>
<dbReference type="PANTHER" id="PTHR36918">
    <property type="match status" value="1"/>
</dbReference>
<dbReference type="PANTHER" id="PTHR36918:SF1">
    <property type="entry name" value="PROTEIN-EXPORT PROTEIN SECB"/>
    <property type="match status" value="1"/>
</dbReference>
<dbReference type="Pfam" id="PF02556">
    <property type="entry name" value="SecB"/>
    <property type="match status" value="1"/>
</dbReference>
<dbReference type="PRINTS" id="PR01594">
    <property type="entry name" value="SECBCHAPRONE"/>
</dbReference>
<dbReference type="SUPFAM" id="SSF54611">
    <property type="entry name" value="SecB-like"/>
    <property type="match status" value="1"/>
</dbReference>
<proteinExistence type="inferred from homology"/>
<gene>
    <name evidence="1" type="primary">secB</name>
    <name type="ordered locus">BOV_1992</name>
</gene>
<organism>
    <name type="scientific">Brucella ovis (strain ATCC 25840 / 63/290 / NCTC 10512)</name>
    <dbReference type="NCBI Taxonomy" id="444178"/>
    <lineage>
        <taxon>Bacteria</taxon>
        <taxon>Pseudomonadati</taxon>
        <taxon>Pseudomonadota</taxon>
        <taxon>Alphaproteobacteria</taxon>
        <taxon>Hyphomicrobiales</taxon>
        <taxon>Brucellaceae</taxon>
        <taxon>Brucella/Ochrobactrum group</taxon>
        <taxon>Brucella</taxon>
    </lineage>
</organism>
<keyword id="KW-0143">Chaperone</keyword>
<keyword id="KW-0963">Cytoplasm</keyword>
<keyword id="KW-0653">Protein transport</keyword>
<keyword id="KW-0811">Translocation</keyword>
<keyword id="KW-0813">Transport</keyword>
<sequence>MSDKAAGETKNGNGATTEPSLNILAQYVKDLSFESPGAPLSLRPREKAPSININVNVNANPLSETDFDVVLTLEAKAVDGKDILFNTELVYGGVFRIQGIPQEHMLPLLFIECPRLLFPFARQIIADATRNGGYPPLMIDPIDFAQMFQQRMAEEQAKSAVKS</sequence>
<reference key="1">
    <citation type="journal article" date="2009" name="PLoS ONE">
        <title>Genome degradation in Brucella ovis corresponds with narrowing of its host range and tissue tropism.</title>
        <authorList>
            <person name="Tsolis R.M."/>
            <person name="Seshadri R."/>
            <person name="Santos R.L."/>
            <person name="Sangari F.J."/>
            <person name="Lobo J.M."/>
            <person name="de Jong M.F."/>
            <person name="Ren Q."/>
            <person name="Myers G."/>
            <person name="Brinkac L.M."/>
            <person name="Nelson W.C."/>
            <person name="Deboy R.T."/>
            <person name="Angiuoli S."/>
            <person name="Khouri H."/>
            <person name="Dimitrov G."/>
            <person name="Robinson J.R."/>
            <person name="Mulligan S."/>
            <person name="Walker R.L."/>
            <person name="Elzer P.E."/>
            <person name="Hassan K.A."/>
            <person name="Paulsen I.T."/>
        </authorList>
    </citation>
    <scope>NUCLEOTIDE SEQUENCE [LARGE SCALE GENOMIC DNA]</scope>
    <source>
        <strain>ATCC 25840 / 63/290 / NCTC 10512</strain>
    </source>
</reference>
<protein>
    <recommendedName>
        <fullName evidence="1">Protein-export protein SecB</fullName>
    </recommendedName>
</protein>
<evidence type="ECO:0000255" key="1">
    <source>
        <dbReference type="HAMAP-Rule" id="MF_00821"/>
    </source>
</evidence>
<comment type="function">
    <text evidence="1">One of the proteins required for the normal export of preproteins out of the cell cytoplasm. It is a molecular chaperone that binds to a subset of precursor proteins, maintaining them in a translocation-competent state. It also specifically binds to its receptor SecA.</text>
</comment>
<comment type="subunit">
    <text evidence="1">Homotetramer, a dimer of dimers. One homotetramer interacts with 1 SecA dimer.</text>
</comment>
<comment type="subcellular location">
    <subcellularLocation>
        <location evidence="1">Cytoplasm</location>
    </subcellularLocation>
</comment>
<comment type="similarity">
    <text evidence="1">Belongs to the SecB family.</text>
</comment>
<feature type="chain" id="PRO_1000062456" description="Protein-export protein SecB">
    <location>
        <begin position="1"/>
        <end position="163"/>
    </location>
</feature>
<accession>A5VT30</accession>
<name>SECB_BRUO2</name>